<accession>B2U1S3</accession>
<sequence length="168" mass="18673">MVEDILAPGLRVVFCGINPGLSSAGTGFPFAHPANRFWKVIYQAGFTDRQLKPQEAQHLLDYRCGVTKLVDRPTVQANEVSKQELHAGGRKLIEKIEDYQPQALAILGKQAYEQGFSQRGAQWGKQTLTIGSTQIWVLPNPSGLSRVSLEKLVEAYRELDQALVVRGR</sequence>
<dbReference type="EC" id="3.2.2.28" evidence="1"/>
<dbReference type="EMBL" id="CP001063">
    <property type="protein sequence ID" value="ACD06536.1"/>
    <property type="molecule type" value="Genomic_DNA"/>
</dbReference>
<dbReference type="RefSeq" id="WP_000228937.1">
    <property type="nucleotide sequence ID" value="NC_010658.1"/>
</dbReference>
<dbReference type="SMR" id="B2U1S3"/>
<dbReference type="STRING" id="344609.SbBS512_E3504"/>
<dbReference type="GeneID" id="93778924"/>
<dbReference type="KEGG" id="sbc:SbBS512_E3504"/>
<dbReference type="HOGENOM" id="CLU_042829_3_1_6"/>
<dbReference type="Proteomes" id="UP000001030">
    <property type="component" value="Chromosome"/>
</dbReference>
<dbReference type="GO" id="GO:0005737">
    <property type="term" value="C:cytoplasm"/>
    <property type="evidence" value="ECO:0007669"/>
    <property type="project" value="UniProtKB-SubCell"/>
</dbReference>
<dbReference type="GO" id="GO:0003677">
    <property type="term" value="F:DNA binding"/>
    <property type="evidence" value="ECO:0007669"/>
    <property type="project" value="UniProtKB-KW"/>
</dbReference>
<dbReference type="GO" id="GO:0008263">
    <property type="term" value="F:pyrimidine-specific mismatch base pair DNA N-glycosylase activity"/>
    <property type="evidence" value="ECO:0007669"/>
    <property type="project" value="UniProtKB-UniRule"/>
</dbReference>
<dbReference type="GO" id="GO:0004844">
    <property type="term" value="F:uracil DNA N-glycosylase activity"/>
    <property type="evidence" value="ECO:0007669"/>
    <property type="project" value="TreeGrafter"/>
</dbReference>
<dbReference type="GO" id="GO:0006285">
    <property type="term" value="P:base-excision repair, AP site formation"/>
    <property type="evidence" value="ECO:0007669"/>
    <property type="project" value="UniProtKB-UniRule"/>
</dbReference>
<dbReference type="CDD" id="cd10028">
    <property type="entry name" value="UDG-F2_TDG_MUG"/>
    <property type="match status" value="1"/>
</dbReference>
<dbReference type="FunFam" id="3.40.470.10:FF:000003">
    <property type="entry name" value="G/U mismatch-specific DNA glycosylase"/>
    <property type="match status" value="1"/>
</dbReference>
<dbReference type="Gene3D" id="3.40.470.10">
    <property type="entry name" value="Uracil-DNA glycosylase-like domain"/>
    <property type="match status" value="1"/>
</dbReference>
<dbReference type="HAMAP" id="MF_01956">
    <property type="entry name" value="MUG"/>
    <property type="match status" value="1"/>
</dbReference>
<dbReference type="InterPro" id="IPR015637">
    <property type="entry name" value="MUG/TDG"/>
</dbReference>
<dbReference type="InterPro" id="IPR023502">
    <property type="entry name" value="MUG_bact"/>
</dbReference>
<dbReference type="InterPro" id="IPR005122">
    <property type="entry name" value="Uracil-DNA_glycosylase-like"/>
</dbReference>
<dbReference type="InterPro" id="IPR036895">
    <property type="entry name" value="Uracil-DNA_glycosylase-like_sf"/>
</dbReference>
<dbReference type="NCBIfam" id="NF007570">
    <property type="entry name" value="PRK10201.1"/>
    <property type="match status" value="1"/>
</dbReference>
<dbReference type="PANTHER" id="PTHR12159">
    <property type="entry name" value="G/T AND G/U MISMATCH-SPECIFIC DNA GLYCOSYLASE"/>
    <property type="match status" value="1"/>
</dbReference>
<dbReference type="PANTHER" id="PTHR12159:SF9">
    <property type="entry name" value="G_T MISMATCH-SPECIFIC THYMINE DNA GLYCOSYLASE"/>
    <property type="match status" value="1"/>
</dbReference>
<dbReference type="Pfam" id="PF03167">
    <property type="entry name" value="UDG"/>
    <property type="match status" value="1"/>
</dbReference>
<dbReference type="SUPFAM" id="SSF52141">
    <property type="entry name" value="Uracil-DNA glycosylase-like"/>
    <property type="match status" value="1"/>
</dbReference>
<evidence type="ECO:0000255" key="1">
    <source>
        <dbReference type="HAMAP-Rule" id="MF_01956"/>
    </source>
</evidence>
<organism>
    <name type="scientific">Shigella boydii serotype 18 (strain CDC 3083-94 / BS512)</name>
    <dbReference type="NCBI Taxonomy" id="344609"/>
    <lineage>
        <taxon>Bacteria</taxon>
        <taxon>Pseudomonadati</taxon>
        <taxon>Pseudomonadota</taxon>
        <taxon>Gammaproteobacteria</taxon>
        <taxon>Enterobacterales</taxon>
        <taxon>Enterobacteriaceae</taxon>
        <taxon>Shigella</taxon>
    </lineage>
</organism>
<protein>
    <recommendedName>
        <fullName evidence="1">G/U mismatch-specific DNA glycosylase</fullName>
        <ecNumber evidence="1">3.2.2.28</ecNumber>
    </recommendedName>
    <alternativeName>
        <fullName evidence="1">Double-strand-specific uracil glycosylase</fullName>
    </alternativeName>
    <alternativeName>
        <fullName evidence="1">Mismatch-specific uracil DNA-glycosylase</fullName>
        <shortName evidence="1">MUG</shortName>
    </alternativeName>
</protein>
<name>MUG_SHIB3</name>
<keyword id="KW-0963">Cytoplasm</keyword>
<keyword id="KW-0227">DNA damage</keyword>
<keyword id="KW-0228">DNA excision</keyword>
<keyword id="KW-0234">DNA repair</keyword>
<keyword id="KW-0238">DNA-binding</keyword>
<keyword id="KW-0378">Hydrolase</keyword>
<keyword id="KW-1185">Reference proteome</keyword>
<reference key="1">
    <citation type="submission" date="2008-05" db="EMBL/GenBank/DDBJ databases">
        <title>Complete sequence of Shigella boydii serotype 18 strain BS512.</title>
        <authorList>
            <person name="Rasko D.A."/>
            <person name="Rosovitz M."/>
            <person name="Maurelli A.T."/>
            <person name="Myers G."/>
            <person name="Seshadri R."/>
            <person name="Cer R."/>
            <person name="Jiang L."/>
            <person name="Ravel J."/>
            <person name="Sebastian Y."/>
        </authorList>
    </citation>
    <scope>NUCLEOTIDE SEQUENCE [LARGE SCALE GENOMIC DNA]</scope>
    <source>
        <strain>CDC 3083-94 / BS512</strain>
    </source>
</reference>
<proteinExistence type="inferred from homology"/>
<feature type="chain" id="PRO_1000188971" description="G/U mismatch-specific DNA glycosylase">
    <location>
        <begin position="1"/>
        <end position="168"/>
    </location>
</feature>
<gene>
    <name evidence="1" type="primary">mug</name>
    <name type="ordered locus">SbBS512_E3504</name>
</gene>
<comment type="function">
    <text evidence="1">Excises ethenocytosine and uracil, which can arise by alkylation or deamination of cytosine, respectively, from the corresponding mispairs with guanine in ds-DNA. It is capable of hydrolyzing the carbon-nitrogen bond between the sugar-phosphate backbone of the DNA and the mispaired base. The complementary strand guanine functions in substrate recognition. Required for DNA damage lesion repair in stationary-phase cells.</text>
</comment>
<comment type="catalytic activity">
    <reaction evidence="1">
        <text>Specifically hydrolyzes mismatched double-stranded DNA and polynucleotides, releasing free uracil.</text>
        <dbReference type="EC" id="3.2.2.28"/>
    </reaction>
</comment>
<comment type="subunit">
    <text evidence="1">Binds DNA as a monomer.</text>
</comment>
<comment type="subcellular location">
    <subcellularLocation>
        <location evidence="1">Cytoplasm</location>
    </subcellularLocation>
</comment>
<comment type="similarity">
    <text evidence="1">Belongs to the uracil-DNA glycosylase (UDG) superfamily. TDG/mug family.</text>
</comment>